<organism>
    <name type="scientific">Listeria monocytogenes serotype 4a (strain HCC23)</name>
    <dbReference type="NCBI Taxonomy" id="552536"/>
    <lineage>
        <taxon>Bacteria</taxon>
        <taxon>Bacillati</taxon>
        <taxon>Bacillota</taxon>
        <taxon>Bacilli</taxon>
        <taxon>Bacillales</taxon>
        <taxon>Listeriaceae</taxon>
        <taxon>Listeria</taxon>
    </lineage>
</organism>
<proteinExistence type="inferred from homology"/>
<name>RL29_LISMH</name>
<dbReference type="EMBL" id="CP001175">
    <property type="protein sequence ID" value="ACK41241.1"/>
    <property type="molecule type" value="Genomic_DNA"/>
</dbReference>
<dbReference type="RefSeq" id="WP_003720942.1">
    <property type="nucleotide sequence ID" value="NC_011660.1"/>
</dbReference>
<dbReference type="SMR" id="B8DB16"/>
<dbReference type="GeneID" id="93240505"/>
<dbReference type="KEGG" id="lmh:LMHCC_2910"/>
<dbReference type="HOGENOM" id="CLU_158491_5_2_9"/>
<dbReference type="GO" id="GO:0022625">
    <property type="term" value="C:cytosolic large ribosomal subunit"/>
    <property type="evidence" value="ECO:0007669"/>
    <property type="project" value="TreeGrafter"/>
</dbReference>
<dbReference type="GO" id="GO:0003735">
    <property type="term" value="F:structural constituent of ribosome"/>
    <property type="evidence" value="ECO:0007669"/>
    <property type="project" value="InterPro"/>
</dbReference>
<dbReference type="GO" id="GO:0006412">
    <property type="term" value="P:translation"/>
    <property type="evidence" value="ECO:0007669"/>
    <property type="project" value="UniProtKB-UniRule"/>
</dbReference>
<dbReference type="CDD" id="cd00427">
    <property type="entry name" value="Ribosomal_L29_HIP"/>
    <property type="match status" value="1"/>
</dbReference>
<dbReference type="FunFam" id="1.10.287.310:FF:000001">
    <property type="entry name" value="50S ribosomal protein L29"/>
    <property type="match status" value="1"/>
</dbReference>
<dbReference type="Gene3D" id="1.10.287.310">
    <property type="match status" value="1"/>
</dbReference>
<dbReference type="HAMAP" id="MF_00374">
    <property type="entry name" value="Ribosomal_uL29"/>
    <property type="match status" value="1"/>
</dbReference>
<dbReference type="InterPro" id="IPR050063">
    <property type="entry name" value="Ribosomal_protein_uL29"/>
</dbReference>
<dbReference type="InterPro" id="IPR001854">
    <property type="entry name" value="Ribosomal_uL29"/>
</dbReference>
<dbReference type="InterPro" id="IPR018254">
    <property type="entry name" value="Ribosomal_uL29_CS"/>
</dbReference>
<dbReference type="InterPro" id="IPR036049">
    <property type="entry name" value="Ribosomal_uL29_sf"/>
</dbReference>
<dbReference type="NCBIfam" id="TIGR00012">
    <property type="entry name" value="L29"/>
    <property type="match status" value="1"/>
</dbReference>
<dbReference type="PANTHER" id="PTHR10916">
    <property type="entry name" value="60S RIBOSOMAL PROTEIN L35/50S RIBOSOMAL PROTEIN L29"/>
    <property type="match status" value="1"/>
</dbReference>
<dbReference type="PANTHER" id="PTHR10916:SF0">
    <property type="entry name" value="LARGE RIBOSOMAL SUBUNIT PROTEIN UL29C"/>
    <property type="match status" value="1"/>
</dbReference>
<dbReference type="Pfam" id="PF00831">
    <property type="entry name" value="Ribosomal_L29"/>
    <property type="match status" value="1"/>
</dbReference>
<dbReference type="SUPFAM" id="SSF46561">
    <property type="entry name" value="Ribosomal protein L29 (L29p)"/>
    <property type="match status" value="1"/>
</dbReference>
<dbReference type="PROSITE" id="PS00579">
    <property type="entry name" value="RIBOSOMAL_L29"/>
    <property type="match status" value="1"/>
</dbReference>
<keyword id="KW-0687">Ribonucleoprotein</keyword>
<keyword id="KW-0689">Ribosomal protein</keyword>
<evidence type="ECO:0000255" key="1">
    <source>
        <dbReference type="HAMAP-Rule" id="MF_00374"/>
    </source>
</evidence>
<evidence type="ECO:0000305" key="2"/>
<accession>B8DB16</accession>
<protein>
    <recommendedName>
        <fullName evidence="1">Large ribosomal subunit protein uL29</fullName>
    </recommendedName>
    <alternativeName>
        <fullName evidence="2">50S ribosomal protein L29</fullName>
    </alternativeName>
</protein>
<feature type="chain" id="PRO_1000194023" description="Large ribosomal subunit protein uL29">
    <location>
        <begin position="1"/>
        <end position="63"/>
    </location>
</feature>
<gene>
    <name evidence="1" type="primary">rpmC</name>
    <name type="ordered locus">LMHCC_2910</name>
</gene>
<comment type="similarity">
    <text evidence="1">Belongs to the universal ribosomal protein uL29 family.</text>
</comment>
<reference key="1">
    <citation type="journal article" date="2011" name="J. Bacteriol.">
        <title>Genome sequence of lineage III Listeria monocytogenes strain HCC23.</title>
        <authorList>
            <person name="Steele C.L."/>
            <person name="Donaldson J.R."/>
            <person name="Paul D."/>
            <person name="Banes M.M."/>
            <person name="Arick T."/>
            <person name="Bridges S.M."/>
            <person name="Lawrence M.L."/>
        </authorList>
    </citation>
    <scope>NUCLEOTIDE SEQUENCE [LARGE SCALE GENOMIC DNA]</scope>
    <source>
        <strain>HCC23</strain>
    </source>
</reference>
<sequence length="63" mass="7402">MKANDIRDLSTTEIQDQEKALKEELFNLRFQLATGQLENTARIREVRKAIARMKTIVRERELA</sequence>